<organism>
    <name type="scientific">Neisseria meningitidis serogroup A / serotype 4A (strain DSM 15465 / Z2491)</name>
    <dbReference type="NCBI Taxonomy" id="122587"/>
    <lineage>
        <taxon>Bacteria</taxon>
        <taxon>Pseudomonadati</taxon>
        <taxon>Pseudomonadota</taxon>
        <taxon>Betaproteobacteria</taxon>
        <taxon>Neisseriales</taxon>
        <taxon>Neisseriaceae</taxon>
        <taxon>Neisseria</taxon>
    </lineage>
</organism>
<protein>
    <recommendedName>
        <fullName evidence="1">Chromosomal replication initiator protein DnaA</fullName>
    </recommendedName>
</protein>
<reference key="1">
    <citation type="journal article" date="2000" name="Nature">
        <title>Complete DNA sequence of a serogroup A strain of Neisseria meningitidis Z2491.</title>
        <authorList>
            <person name="Parkhill J."/>
            <person name="Achtman M."/>
            <person name="James K.D."/>
            <person name="Bentley S.D."/>
            <person name="Churcher C.M."/>
            <person name="Klee S.R."/>
            <person name="Morelli G."/>
            <person name="Basham D."/>
            <person name="Brown D."/>
            <person name="Chillingworth T."/>
            <person name="Davies R.M."/>
            <person name="Davis P."/>
            <person name="Devlin K."/>
            <person name="Feltwell T."/>
            <person name="Hamlin N."/>
            <person name="Holroyd S."/>
            <person name="Jagels K."/>
            <person name="Leather S."/>
            <person name="Moule S."/>
            <person name="Mungall K.L."/>
            <person name="Quail M.A."/>
            <person name="Rajandream M.A."/>
            <person name="Rutherford K.M."/>
            <person name="Simmonds M."/>
            <person name="Skelton J."/>
            <person name="Whitehead S."/>
            <person name="Spratt B.G."/>
            <person name="Barrell B.G."/>
        </authorList>
    </citation>
    <scope>NUCLEOTIDE SEQUENCE [LARGE SCALE GENOMIC DNA]</scope>
    <source>
        <strain>DSM 15465 / Z2491</strain>
    </source>
</reference>
<feature type="chain" id="PRO_0000114220" description="Chromosomal replication initiator protein DnaA">
    <location>
        <begin position="1"/>
        <end position="518"/>
    </location>
</feature>
<feature type="region of interest" description="Domain I, interacts with DnaA modulators" evidence="1">
    <location>
        <begin position="1"/>
        <end position="72"/>
    </location>
</feature>
<feature type="region of interest" description="Domain II" evidence="1">
    <location>
        <begin position="72"/>
        <end position="180"/>
    </location>
</feature>
<feature type="region of interest" description="Disordered" evidence="2">
    <location>
        <begin position="145"/>
        <end position="178"/>
    </location>
</feature>
<feature type="region of interest" description="Domain III, AAA+ region" evidence="1">
    <location>
        <begin position="181"/>
        <end position="397"/>
    </location>
</feature>
<feature type="region of interest" description="Domain IV, binds dsDNA" evidence="1">
    <location>
        <begin position="398"/>
        <end position="518"/>
    </location>
</feature>
<feature type="compositionally biased region" description="Basic and acidic residues" evidence="2">
    <location>
        <begin position="164"/>
        <end position="177"/>
    </location>
</feature>
<feature type="binding site" evidence="1">
    <location>
        <position position="225"/>
    </location>
    <ligand>
        <name>ATP</name>
        <dbReference type="ChEBI" id="CHEBI:30616"/>
    </ligand>
</feature>
<feature type="binding site" evidence="1">
    <location>
        <position position="227"/>
    </location>
    <ligand>
        <name>ATP</name>
        <dbReference type="ChEBI" id="CHEBI:30616"/>
    </ligand>
</feature>
<feature type="binding site" evidence="1">
    <location>
        <position position="228"/>
    </location>
    <ligand>
        <name>ATP</name>
        <dbReference type="ChEBI" id="CHEBI:30616"/>
    </ligand>
</feature>
<feature type="binding site" evidence="1">
    <location>
        <position position="229"/>
    </location>
    <ligand>
        <name>ATP</name>
        <dbReference type="ChEBI" id="CHEBI:30616"/>
    </ligand>
</feature>
<gene>
    <name evidence="1" type="primary">dnaA</name>
    <name type="ordered locus">NMA0552</name>
</gene>
<name>DNAA_NEIMA</name>
<dbReference type="EMBL" id="AL157959">
    <property type="protein sequence ID" value="CAM07828.1"/>
    <property type="molecule type" value="Genomic_DNA"/>
</dbReference>
<dbReference type="PIR" id="H81973">
    <property type="entry name" value="H81973"/>
</dbReference>
<dbReference type="RefSeq" id="WP_002246444.1">
    <property type="nucleotide sequence ID" value="NC_003116.1"/>
</dbReference>
<dbReference type="SMR" id="Q9JW45"/>
<dbReference type="EnsemblBacteria" id="CAM07828">
    <property type="protein sequence ID" value="CAM07828"/>
    <property type="gene ID" value="NMA0552"/>
</dbReference>
<dbReference type="GeneID" id="93386807"/>
<dbReference type="KEGG" id="nma:NMA0552"/>
<dbReference type="HOGENOM" id="CLU_026910_0_1_4"/>
<dbReference type="Proteomes" id="UP000000626">
    <property type="component" value="Chromosome"/>
</dbReference>
<dbReference type="GO" id="GO:0005737">
    <property type="term" value="C:cytoplasm"/>
    <property type="evidence" value="ECO:0007669"/>
    <property type="project" value="UniProtKB-SubCell"/>
</dbReference>
<dbReference type="GO" id="GO:0005886">
    <property type="term" value="C:plasma membrane"/>
    <property type="evidence" value="ECO:0007669"/>
    <property type="project" value="TreeGrafter"/>
</dbReference>
<dbReference type="GO" id="GO:0005524">
    <property type="term" value="F:ATP binding"/>
    <property type="evidence" value="ECO:0007669"/>
    <property type="project" value="UniProtKB-UniRule"/>
</dbReference>
<dbReference type="GO" id="GO:0016887">
    <property type="term" value="F:ATP hydrolysis activity"/>
    <property type="evidence" value="ECO:0007669"/>
    <property type="project" value="InterPro"/>
</dbReference>
<dbReference type="GO" id="GO:0003688">
    <property type="term" value="F:DNA replication origin binding"/>
    <property type="evidence" value="ECO:0007669"/>
    <property type="project" value="UniProtKB-UniRule"/>
</dbReference>
<dbReference type="GO" id="GO:0008289">
    <property type="term" value="F:lipid binding"/>
    <property type="evidence" value="ECO:0007669"/>
    <property type="project" value="UniProtKB-KW"/>
</dbReference>
<dbReference type="GO" id="GO:0006270">
    <property type="term" value="P:DNA replication initiation"/>
    <property type="evidence" value="ECO:0007669"/>
    <property type="project" value="UniProtKB-UniRule"/>
</dbReference>
<dbReference type="GO" id="GO:0006275">
    <property type="term" value="P:regulation of DNA replication"/>
    <property type="evidence" value="ECO:0007669"/>
    <property type="project" value="UniProtKB-UniRule"/>
</dbReference>
<dbReference type="CDD" id="cd00009">
    <property type="entry name" value="AAA"/>
    <property type="match status" value="1"/>
</dbReference>
<dbReference type="CDD" id="cd06571">
    <property type="entry name" value="Bac_DnaA_C"/>
    <property type="match status" value="1"/>
</dbReference>
<dbReference type="FunFam" id="1.10.1750.10:FF:000006">
    <property type="entry name" value="Chromosomal replication initiator protein DnaA"/>
    <property type="match status" value="1"/>
</dbReference>
<dbReference type="FunFam" id="1.10.8.60:FF:000003">
    <property type="entry name" value="Chromosomal replication initiator protein DnaA"/>
    <property type="match status" value="1"/>
</dbReference>
<dbReference type="FunFam" id="3.40.50.300:FF:000668">
    <property type="entry name" value="Chromosomal replication initiator protein DnaA"/>
    <property type="match status" value="1"/>
</dbReference>
<dbReference type="Gene3D" id="1.10.1750.10">
    <property type="match status" value="1"/>
</dbReference>
<dbReference type="Gene3D" id="1.10.8.60">
    <property type="match status" value="1"/>
</dbReference>
<dbReference type="Gene3D" id="3.30.300.180">
    <property type="match status" value="1"/>
</dbReference>
<dbReference type="Gene3D" id="3.40.50.300">
    <property type="entry name" value="P-loop containing nucleotide triphosphate hydrolases"/>
    <property type="match status" value="1"/>
</dbReference>
<dbReference type="HAMAP" id="MF_00377">
    <property type="entry name" value="DnaA_bact"/>
    <property type="match status" value="1"/>
</dbReference>
<dbReference type="InterPro" id="IPR003593">
    <property type="entry name" value="AAA+_ATPase"/>
</dbReference>
<dbReference type="InterPro" id="IPR001957">
    <property type="entry name" value="Chromosome_initiator_DnaA"/>
</dbReference>
<dbReference type="InterPro" id="IPR020591">
    <property type="entry name" value="Chromosome_initiator_DnaA-like"/>
</dbReference>
<dbReference type="InterPro" id="IPR018312">
    <property type="entry name" value="Chromosome_initiator_DnaA_CS"/>
</dbReference>
<dbReference type="InterPro" id="IPR013159">
    <property type="entry name" value="DnaA_C"/>
</dbReference>
<dbReference type="InterPro" id="IPR013317">
    <property type="entry name" value="DnaA_dom"/>
</dbReference>
<dbReference type="InterPro" id="IPR024633">
    <property type="entry name" value="DnaA_N_dom"/>
</dbReference>
<dbReference type="InterPro" id="IPR038454">
    <property type="entry name" value="DnaA_N_sf"/>
</dbReference>
<dbReference type="InterPro" id="IPR027417">
    <property type="entry name" value="P-loop_NTPase"/>
</dbReference>
<dbReference type="InterPro" id="IPR010921">
    <property type="entry name" value="Trp_repressor/repl_initiator"/>
</dbReference>
<dbReference type="NCBIfam" id="TIGR00362">
    <property type="entry name" value="DnaA"/>
    <property type="match status" value="1"/>
</dbReference>
<dbReference type="PANTHER" id="PTHR30050">
    <property type="entry name" value="CHROMOSOMAL REPLICATION INITIATOR PROTEIN DNAA"/>
    <property type="match status" value="1"/>
</dbReference>
<dbReference type="PANTHER" id="PTHR30050:SF2">
    <property type="entry name" value="CHROMOSOMAL REPLICATION INITIATOR PROTEIN DNAA"/>
    <property type="match status" value="1"/>
</dbReference>
<dbReference type="Pfam" id="PF00308">
    <property type="entry name" value="Bac_DnaA"/>
    <property type="match status" value="1"/>
</dbReference>
<dbReference type="Pfam" id="PF08299">
    <property type="entry name" value="Bac_DnaA_C"/>
    <property type="match status" value="1"/>
</dbReference>
<dbReference type="Pfam" id="PF11638">
    <property type="entry name" value="DnaA_N"/>
    <property type="match status" value="1"/>
</dbReference>
<dbReference type="PRINTS" id="PR00051">
    <property type="entry name" value="DNAA"/>
</dbReference>
<dbReference type="SMART" id="SM00382">
    <property type="entry name" value="AAA"/>
    <property type="match status" value="1"/>
</dbReference>
<dbReference type="SMART" id="SM00760">
    <property type="entry name" value="Bac_DnaA_C"/>
    <property type="match status" value="1"/>
</dbReference>
<dbReference type="SUPFAM" id="SSF52540">
    <property type="entry name" value="P-loop containing nucleoside triphosphate hydrolases"/>
    <property type="match status" value="1"/>
</dbReference>
<dbReference type="SUPFAM" id="SSF48295">
    <property type="entry name" value="TrpR-like"/>
    <property type="match status" value="1"/>
</dbReference>
<dbReference type="PROSITE" id="PS01008">
    <property type="entry name" value="DNAA"/>
    <property type="match status" value="1"/>
</dbReference>
<accession>Q9JW45</accession>
<accession>A1IQ03</accession>
<sequence>MTLAEFWPLCLRRLHDMLPHGQFAQWIAPLTVGEEGGVWVVYGKNQFACNMLKSQFAGKIEAVREELAAGRSAFVFKPGEGVCYEMAAVEGAVEPAEPSLHAGSEEMPVQEVLLDELPSEEPVKPAASKTAADILAERMRNLPHEPRQAAGSASRPESAAVAKARTDAQRDAEEARYEQTNLSPDYTFDTLVEGKGNRLAAAAAQAIAESPGQSYNPFFLYGSTGLGKTHLVQAVGNELLKNRPDAKVRYMHSDDYIRSFMKAVRNNTYDVFKQQYKQYDLLIIDDIQFIKGKDRTMEEFFYLYNHFHNEKKQLILTCDVLPAKIEGMDDRLKSRFSWGLTLELEPPELEMRIAILQKKAEAAGISIEDEAALFIANLIRSNVRELEGAFNRVGASSRFMNRPVIDIDLARTALQDIIAEKHKVITADIIIDAVAKYYRIKISDVLGKKRTRNIARPRQVAMSLTKELTTLSLPSIGDSFGGRDHTTVMHGIRAVAKLREEDPELAQDYEKLLILIQN</sequence>
<evidence type="ECO:0000255" key="1">
    <source>
        <dbReference type="HAMAP-Rule" id="MF_00377"/>
    </source>
</evidence>
<evidence type="ECO:0000256" key="2">
    <source>
        <dbReference type="SAM" id="MobiDB-lite"/>
    </source>
</evidence>
<proteinExistence type="inferred from homology"/>
<comment type="function">
    <text evidence="1">Plays an essential role in the initiation and regulation of chromosomal replication. ATP-DnaA binds to the origin of replication (oriC) to initiate formation of the DNA replication initiation complex once per cell cycle. Binds the DnaA box (a 9 base pair repeat at the origin) and separates the double-stranded (ds)DNA. Forms a right-handed helical filament on oriC DNA; dsDNA binds to the exterior of the filament while single-stranded (ss)DNA is stabiized in the filament's interior. The ATP-DnaA-oriC complex binds and stabilizes one strand of the AT-rich DNA unwinding element (DUE), permitting loading of DNA polymerase. After initiation quickly degrades to an ADP-DnaA complex that is not apt for DNA replication. Binds acidic phospholipids.</text>
</comment>
<comment type="subunit">
    <text evidence="1">Oligomerizes as a right-handed, spiral filament on DNA at oriC.</text>
</comment>
<comment type="subcellular location">
    <subcellularLocation>
        <location evidence="1">Cytoplasm</location>
    </subcellularLocation>
</comment>
<comment type="domain">
    <text evidence="1">Domain I is involved in oligomerization and binding regulators, domain II is flexibile and of varying length in different bacteria, domain III forms the AAA+ region, while domain IV binds dsDNA.</text>
</comment>
<comment type="similarity">
    <text evidence="1">Belongs to the DnaA family.</text>
</comment>
<keyword id="KW-0067">ATP-binding</keyword>
<keyword id="KW-0963">Cytoplasm</keyword>
<keyword id="KW-0235">DNA replication</keyword>
<keyword id="KW-0238">DNA-binding</keyword>
<keyword id="KW-0446">Lipid-binding</keyword>
<keyword id="KW-0547">Nucleotide-binding</keyword>